<sequence>MKDLISIINVKDHVGETVKIGAWVADKSGKGKLQFLQLRDGTAFFQAVVFKPNMIEKFGEEEGTAKFDEIKHLSQETSVYVTGVVKEDSRSKFGYELDVTELEVIGHSHDYPITPKEHGVEFLLDNRHLWLRSKRQMAMMQVRNAIIYASYDFFAKNGFIKFDSPILSGNAAENTTELFETDYFGNSAFLSQSGQLYLEAGAMALGRVFDFGPVFRAEKSKTRRHLTEFWMMDAEYPFVTHDESLDIQEAYVKALIQGVLDNAAYALETLERDTSMLQKYIDTPFKRVSYDDAIDLLQAHENDDDTDYEHVEHGDDFGSPHETWISNYYGVPTFIVNYPASFKAFYMKPVPGNPERVLCADLLAPEGYGEIIGGSERETDYDLLLKKIADFGLDPKDYDWYLELRKFGSVPHAGFGLGLERMVTFVAGTEHIREAIPFPRMINRIQP</sequence>
<name>SYN_LACLS</name>
<evidence type="ECO:0000255" key="1">
    <source>
        <dbReference type="HAMAP-Rule" id="MF_00534"/>
    </source>
</evidence>
<protein>
    <recommendedName>
        <fullName evidence="1">Asparagine--tRNA ligase</fullName>
        <ecNumber evidence="1">6.1.1.22</ecNumber>
    </recommendedName>
    <alternativeName>
        <fullName evidence="1">Asparaginyl-tRNA synthetase</fullName>
        <shortName evidence="1">AsnRS</shortName>
    </alternativeName>
</protein>
<reference key="1">
    <citation type="journal article" date="2006" name="Proc. Natl. Acad. Sci. U.S.A.">
        <title>Comparative genomics of the lactic acid bacteria.</title>
        <authorList>
            <person name="Makarova K.S."/>
            <person name="Slesarev A."/>
            <person name="Wolf Y.I."/>
            <person name="Sorokin A."/>
            <person name="Mirkin B."/>
            <person name="Koonin E.V."/>
            <person name="Pavlov A."/>
            <person name="Pavlova N."/>
            <person name="Karamychev V."/>
            <person name="Polouchine N."/>
            <person name="Shakhova V."/>
            <person name="Grigoriev I."/>
            <person name="Lou Y."/>
            <person name="Rohksar D."/>
            <person name="Lucas S."/>
            <person name="Huang K."/>
            <person name="Goodstein D.M."/>
            <person name="Hawkins T."/>
            <person name="Plengvidhya V."/>
            <person name="Welker D."/>
            <person name="Hughes J."/>
            <person name="Goh Y."/>
            <person name="Benson A."/>
            <person name="Baldwin K."/>
            <person name="Lee J.-H."/>
            <person name="Diaz-Muniz I."/>
            <person name="Dosti B."/>
            <person name="Smeianov V."/>
            <person name="Wechter W."/>
            <person name="Barabote R."/>
            <person name="Lorca G."/>
            <person name="Altermann E."/>
            <person name="Barrangou R."/>
            <person name="Ganesan B."/>
            <person name="Xie Y."/>
            <person name="Rawsthorne H."/>
            <person name="Tamir D."/>
            <person name="Parker C."/>
            <person name="Breidt F."/>
            <person name="Broadbent J.R."/>
            <person name="Hutkins R."/>
            <person name="O'Sullivan D."/>
            <person name="Steele J."/>
            <person name="Unlu G."/>
            <person name="Saier M.H. Jr."/>
            <person name="Klaenhammer T."/>
            <person name="Richardson P."/>
            <person name="Kozyavkin S."/>
            <person name="Weimer B.C."/>
            <person name="Mills D.A."/>
        </authorList>
    </citation>
    <scope>NUCLEOTIDE SEQUENCE [LARGE SCALE GENOMIC DNA]</scope>
    <source>
        <strain>SK11</strain>
    </source>
</reference>
<accession>Q02X21</accession>
<gene>
    <name evidence="1" type="primary">asnS</name>
    <name type="ordered locus">LACR_2020</name>
</gene>
<proteinExistence type="inferred from homology"/>
<comment type="catalytic activity">
    <reaction evidence="1">
        <text>tRNA(Asn) + L-asparagine + ATP = L-asparaginyl-tRNA(Asn) + AMP + diphosphate + H(+)</text>
        <dbReference type="Rhea" id="RHEA:11180"/>
        <dbReference type="Rhea" id="RHEA-COMP:9659"/>
        <dbReference type="Rhea" id="RHEA-COMP:9674"/>
        <dbReference type="ChEBI" id="CHEBI:15378"/>
        <dbReference type="ChEBI" id="CHEBI:30616"/>
        <dbReference type="ChEBI" id="CHEBI:33019"/>
        <dbReference type="ChEBI" id="CHEBI:58048"/>
        <dbReference type="ChEBI" id="CHEBI:78442"/>
        <dbReference type="ChEBI" id="CHEBI:78515"/>
        <dbReference type="ChEBI" id="CHEBI:456215"/>
        <dbReference type="EC" id="6.1.1.22"/>
    </reaction>
</comment>
<comment type="subunit">
    <text evidence="1">Homodimer.</text>
</comment>
<comment type="subcellular location">
    <subcellularLocation>
        <location evidence="1">Cytoplasm</location>
    </subcellularLocation>
</comment>
<comment type="similarity">
    <text evidence="1">Belongs to the class-II aminoacyl-tRNA synthetase family.</text>
</comment>
<feature type="chain" id="PRO_1000061022" description="Asparagine--tRNA ligase">
    <location>
        <begin position="1"/>
        <end position="447"/>
    </location>
</feature>
<dbReference type="EC" id="6.1.1.22" evidence="1"/>
<dbReference type="EMBL" id="CP000425">
    <property type="protein sequence ID" value="ABJ73501.1"/>
    <property type="molecule type" value="Genomic_DNA"/>
</dbReference>
<dbReference type="RefSeq" id="WP_011676843.1">
    <property type="nucleotide sequence ID" value="NC_008527.1"/>
</dbReference>
<dbReference type="SMR" id="Q02X21"/>
<dbReference type="KEGG" id="llc:LACR_2020"/>
<dbReference type="HOGENOM" id="CLU_004553_2_0_9"/>
<dbReference type="Proteomes" id="UP000000240">
    <property type="component" value="Chromosome"/>
</dbReference>
<dbReference type="GO" id="GO:0005737">
    <property type="term" value="C:cytoplasm"/>
    <property type="evidence" value="ECO:0007669"/>
    <property type="project" value="UniProtKB-SubCell"/>
</dbReference>
<dbReference type="GO" id="GO:0004816">
    <property type="term" value="F:asparagine-tRNA ligase activity"/>
    <property type="evidence" value="ECO:0007669"/>
    <property type="project" value="UniProtKB-UniRule"/>
</dbReference>
<dbReference type="GO" id="GO:0005524">
    <property type="term" value="F:ATP binding"/>
    <property type="evidence" value="ECO:0007669"/>
    <property type="project" value="UniProtKB-UniRule"/>
</dbReference>
<dbReference type="GO" id="GO:0140096">
    <property type="term" value="F:catalytic activity, acting on a protein"/>
    <property type="evidence" value="ECO:0007669"/>
    <property type="project" value="UniProtKB-ARBA"/>
</dbReference>
<dbReference type="GO" id="GO:0003676">
    <property type="term" value="F:nucleic acid binding"/>
    <property type="evidence" value="ECO:0007669"/>
    <property type="project" value="InterPro"/>
</dbReference>
<dbReference type="GO" id="GO:0016740">
    <property type="term" value="F:transferase activity"/>
    <property type="evidence" value="ECO:0007669"/>
    <property type="project" value="UniProtKB-ARBA"/>
</dbReference>
<dbReference type="GO" id="GO:0006421">
    <property type="term" value="P:asparaginyl-tRNA aminoacylation"/>
    <property type="evidence" value="ECO:0007669"/>
    <property type="project" value="UniProtKB-UniRule"/>
</dbReference>
<dbReference type="CDD" id="cd04323">
    <property type="entry name" value="AsnRS_cyto_like_N"/>
    <property type="match status" value="1"/>
</dbReference>
<dbReference type="CDD" id="cd00776">
    <property type="entry name" value="AsxRS_core"/>
    <property type="match status" value="1"/>
</dbReference>
<dbReference type="Gene3D" id="3.30.930.10">
    <property type="entry name" value="Bira Bifunctional Protein, Domain 2"/>
    <property type="match status" value="1"/>
</dbReference>
<dbReference type="Gene3D" id="2.40.50.140">
    <property type="entry name" value="Nucleic acid-binding proteins"/>
    <property type="match status" value="1"/>
</dbReference>
<dbReference type="HAMAP" id="MF_00534">
    <property type="entry name" value="Asn_tRNA_synth"/>
    <property type="match status" value="1"/>
</dbReference>
<dbReference type="InterPro" id="IPR004364">
    <property type="entry name" value="Aa-tRNA-synt_II"/>
</dbReference>
<dbReference type="InterPro" id="IPR006195">
    <property type="entry name" value="aa-tRNA-synth_II"/>
</dbReference>
<dbReference type="InterPro" id="IPR045864">
    <property type="entry name" value="aa-tRNA-synth_II/BPL/LPL"/>
</dbReference>
<dbReference type="InterPro" id="IPR004522">
    <property type="entry name" value="Asn-tRNA-ligase"/>
</dbReference>
<dbReference type="InterPro" id="IPR002312">
    <property type="entry name" value="Asp/Asn-tRNA-synth_IIb"/>
</dbReference>
<dbReference type="InterPro" id="IPR012340">
    <property type="entry name" value="NA-bd_OB-fold"/>
</dbReference>
<dbReference type="InterPro" id="IPR004365">
    <property type="entry name" value="NA-bd_OB_tRNA"/>
</dbReference>
<dbReference type="NCBIfam" id="TIGR00457">
    <property type="entry name" value="asnS"/>
    <property type="match status" value="1"/>
</dbReference>
<dbReference type="NCBIfam" id="NF003037">
    <property type="entry name" value="PRK03932.1"/>
    <property type="match status" value="1"/>
</dbReference>
<dbReference type="PANTHER" id="PTHR22594:SF34">
    <property type="entry name" value="ASPARAGINE--TRNA LIGASE, MITOCHONDRIAL-RELATED"/>
    <property type="match status" value="1"/>
</dbReference>
<dbReference type="PANTHER" id="PTHR22594">
    <property type="entry name" value="ASPARTYL/LYSYL-TRNA SYNTHETASE"/>
    <property type="match status" value="1"/>
</dbReference>
<dbReference type="Pfam" id="PF00152">
    <property type="entry name" value="tRNA-synt_2"/>
    <property type="match status" value="1"/>
</dbReference>
<dbReference type="Pfam" id="PF01336">
    <property type="entry name" value="tRNA_anti-codon"/>
    <property type="match status" value="1"/>
</dbReference>
<dbReference type="PRINTS" id="PR01042">
    <property type="entry name" value="TRNASYNTHASP"/>
</dbReference>
<dbReference type="SUPFAM" id="SSF55681">
    <property type="entry name" value="Class II aaRS and biotin synthetases"/>
    <property type="match status" value="1"/>
</dbReference>
<dbReference type="SUPFAM" id="SSF50249">
    <property type="entry name" value="Nucleic acid-binding proteins"/>
    <property type="match status" value="1"/>
</dbReference>
<dbReference type="PROSITE" id="PS50862">
    <property type="entry name" value="AA_TRNA_LIGASE_II"/>
    <property type="match status" value="1"/>
</dbReference>
<organism>
    <name type="scientific">Lactococcus lactis subsp. cremoris (strain SK11)</name>
    <dbReference type="NCBI Taxonomy" id="272622"/>
    <lineage>
        <taxon>Bacteria</taxon>
        <taxon>Bacillati</taxon>
        <taxon>Bacillota</taxon>
        <taxon>Bacilli</taxon>
        <taxon>Lactobacillales</taxon>
        <taxon>Streptococcaceae</taxon>
        <taxon>Lactococcus</taxon>
        <taxon>Lactococcus cremoris subsp. cremoris</taxon>
    </lineage>
</organism>
<keyword id="KW-0030">Aminoacyl-tRNA synthetase</keyword>
<keyword id="KW-0067">ATP-binding</keyword>
<keyword id="KW-0963">Cytoplasm</keyword>
<keyword id="KW-0436">Ligase</keyword>
<keyword id="KW-0547">Nucleotide-binding</keyword>
<keyword id="KW-0648">Protein biosynthesis</keyword>